<gene>
    <name evidence="1" type="primary">ycf3</name>
</gene>
<sequence length="171" mass="19796">MSQKNDNFIDKTFTVLADILLKVLPATKEEKKAFSYYRYGMSAQSSGDYAEALENYYEALKLEEDPFDRSYILYNIGLIYGNNGDYSKSLDYYHQALDLNSRLPQALNNIAVIYHYQGTKSSEKKEFEVAQNNFDKAASYWKKAIRLAPNNYIEAQNWLKITGKLSETEIF</sequence>
<reference key="1">
    <citation type="journal article" date="2005" name="DNA Res.">
        <title>The complete plastid genome sequence of the haptophyte Emiliania huxleyi: a comparison to other plastid genomes.</title>
        <authorList>
            <person name="Sanchez-Puerta M.V."/>
            <person name="Bachvaroff T.R."/>
            <person name="Delwiche C.F."/>
        </authorList>
    </citation>
    <scope>NUCLEOTIDE SEQUENCE [LARGE SCALE GENOMIC DNA]</scope>
    <source>
        <strain>CCMP373 / CSIRO-CS-57 / BT6</strain>
    </source>
</reference>
<geneLocation type="chloroplast"/>
<feature type="chain" id="PRO_0000275645" description="Photosystem I assembly protein Ycf3">
    <location>
        <begin position="1"/>
        <end position="171"/>
    </location>
</feature>
<feature type="repeat" description="TPR 1">
    <location>
        <begin position="33"/>
        <end position="66"/>
    </location>
</feature>
<feature type="repeat" description="TPR 2">
    <location>
        <begin position="70"/>
        <end position="103"/>
    </location>
</feature>
<feature type="repeat" description="TPR 3">
    <location>
        <begin position="118"/>
        <end position="151"/>
    </location>
</feature>
<organism>
    <name type="scientific">Emiliania huxleyi</name>
    <name type="common">Coccolithophore</name>
    <name type="synonym">Pontosphaera huxleyi</name>
    <dbReference type="NCBI Taxonomy" id="2903"/>
    <lineage>
        <taxon>Eukaryota</taxon>
        <taxon>Haptista</taxon>
        <taxon>Haptophyta</taxon>
        <taxon>Prymnesiophyceae</taxon>
        <taxon>Isochrysidales</taxon>
        <taxon>Noelaerhabdaceae</taxon>
        <taxon>Emiliania</taxon>
    </lineage>
</organism>
<proteinExistence type="inferred from homology"/>
<protein>
    <recommendedName>
        <fullName evidence="1">Photosystem I assembly protein Ycf3</fullName>
    </recommendedName>
</protein>
<keyword id="KW-0150">Chloroplast</keyword>
<keyword id="KW-0472">Membrane</keyword>
<keyword id="KW-0602">Photosynthesis</keyword>
<keyword id="KW-0934">Plastid</keyword>
<keyword id="KW-0677">Repeat</keyword>
<keyword id="KW-0793">Thylakoid</keyword>
<keyword id="KW-0802">TPR repeat</keyword>
<comment type="function">
    <text evidence="1">Essential for the assembly of the photosystem I (PSI) complex. May act as a chaperone-like factor to guide the assembly of the PSI subunits.</text>
</comment>
<comment type="subcellular location">
    <subcellularLocation>
        <location evidence="1">Plastid</location>
        <location evidence="1">Chloroplast thylakoid membrane</location>
        <topology evidence="1">Peripheral membrane protein</topology>
    </subcellularLocation>
</comment>
<comment type="similarity">
    <text evidence="1">Belongs to the Ycf3 family.</text>
</comment>
<dbReference type="EMBL" id="AY741371">
    <property type="protein sequence ID" value="AAX13872.1"/>
    <property type="molecule type" value="Genomic_DNA"/>
</dbReference>
<dbReference type="RefSeq" id="YP_277373.1">
    <property type="nucleotide sequence ID" value="NC_007288.1"/>
</dbReference>
<dbReference type="SMR" id="Q4G394"/>
<dbReference type="STRING" id="2903.Q4G394"/>
<dbReference type="GeneID" id="3562452"/>
<dbReference type="GO" id="GO:0009535">
    <property type="term" value="C:chloroplast thylakoid membrane"/>
    <property type="evidence" value="ECO:0007669"/>
    <property type="project" value="UniProtKB-SubCell"/>
</dbReference>
<dbReference type="GO" id="GO:0015979">
    <property type="term" value="P:photosynthesis"/>
    <property type="evidence" value="ECO:0007669"/>
    <property type="project" value="UniProtKB-UniRule"/>
</dbReference>
<dbReference type="Gene3D" id="1.25.40.10">
    <property type="entry name" value="Tetratricopeptide repeat domain"/>
    <property type="match status" value="1"/>
</dbReference>
<dbReference type="HAMAP" id="MF_00439">
    <property type="entry name" value="Ycf3"/>
    <property type="match status" value="1"/>
</dbReference>
<dbReference type="InterPro" id="IPR022818">
    <property type="entry name" value="PSI_Ycf3_assembly"/>
</dbReference>
<dbReference type="InterPro" id="IPR011990">
    <property type="entry name" value="TPR-like_helical_dom_sf"/>
</dbReference>
<dbReference type="InterPro" id="IPR019734">
    <property type="entry name" value="TPR_rpt"/>
</dbReference>
<dbReference type="InterPro" id="IPR051685">
    <property type="entry name" value="Ycf3/AcsC/BcsC/TPR_MFPF"/>
</dbReference>
<dbReference type="NCBIfam" id="NF002725">
    <property type="entry name" value="PRK02603.1"/>
    <property type="match status" value="1"/>
</dbReference>
<dbReference type="PANTHER" id="PTHR44943">
    <property type="entry name" value="CELLULOSE SYNTHASE OPERON PROTEIN C"/>
    <property type="match status" value="1"/>
</dbReference>
<dbReference type="PANTHER" id="PTHR44943:SF9">
    <property type="entry name" value="TPR-REPEAT-CONTAINING PROTEIN"/>
    <property type="match status" value="1"/>
</dbReference>
<dbReference type="Pfam" id="PF00515">
    <property type="entry name" value="TPR_1"/>
    <property type="match status" value="1"/>
</dbReference>
<dbReference type="Pfam" id="PF13181">
    <property type="entry name" value="TPR_8"/>
    <property type="match status" value="1"/>
</dbReference>
<dbReference type="SMART" id="SM00028">
    <property type="entry name" value="TPR"/>
    <property type="match status" value="3"/>
</dbReference>
<dbReference type="SUPFAM" id="SSF48452">
    <property type="entry name" value="TPR-like"/>
    <property type="match status" value="1"/>
</dbReference>
<dbReference type="PROSITE" id="PS50005">
    <property type="entry name" value="TPR"/>
    <property type="match status" value="3"/>
</dbReference>
<dbReference type="PROSITE" id="PS50293">
    <property type="entry name" value="TPR_REGION"/>
    <property type="match status" value="1"/>
</dbReference>
<accession>Q4G394</accession>
<evidence type="ECO:0000255" key="1">
    <source>
        <dbReference type="HAMAP-Rule" id="MF_00439"/>
    </source>
</evidence>
<name>YCF3_EMIHU</name>